<feature type="initiator methionine" description="Removed" evidence="1">
    <location>
        <position position="1"/>
    </location>
</feature>
<feature type="chain" id="PRO_0000170888" description="Formamidopyrimidine-DNA glycosylase">
    <location>
        <begin position="2"/>
        <end position="271"/>
    </location>
</feature>
<feature type="zinc finger region" description="FPG-type">
    <location>
        <begin position="237"/>
        <end position="271"/>
    </location>
</feature>
<feature type="active site" description="Schiff-base intermediate with DNA" evidence="1">
    <location>
        <position position="2"/>
    </location>
</feature>
<feature type="active site" description="Proton donor" evidence="1">
    <location>
        <position position="3"/>
    </location>
</feature>
<feature type="active site" description="Proton donor; for beta-elimination activity" evidence="1">
    <location>
        <position position="58"/>
    </location>
</feature>
<feature type="active site" description="Proton donor; for delta-elimination activity" evidence="1">
    <location>
        <position position="261"/>
    </location>
</feature>
<feature type="binding site" evidence="1">
    <location>
        <position position="92"/>
    </location>
    <ligand>
        <name>DNA</name>
        <dbReference type="ChEBI" id="CHEBI:16991"/>
    </ligand>
</feature>
<feature type="binding site" evidence="1">
    <location>
        <position position="111"/>
    </location>
    <ligand>
        <name>DNA</name>
        <dbReference type="ChEBI" id="CHEBI:16991"/>
    </ligand>
</feature>
<feature type="binding site" evidence="1">
    <location>
        <position position="152"/>
    </location>
    <ligand>
        <name>DNA</name>
        <dbReference type="ChEBI" id="CHEBI:16991"/>
    </ligand>
</feature>
<organism>
    <name type="scientific">Xylella fastidiosa (strain 9a5c)</name>
    <dbReference type="NCBI Taxonomy" id="160492"/>
    <lineage>
        <taxon>Bacteria</taxon>
        <taxon>Pseudomonadati</taxon>
        <taxon>Pseudomonadota</taxon>
        <taxon>Gammaproteobacteria</taxon>
        <taxon>Lysobacterales</taxon>
        <taxon>Lysobacteraceae</taxon>
        <taxon>Xylella</taxon>
    </lineage>
</organism>
<sequence>MPELPEVETTLRGLLPYLTNQLIYSLTLRRRTLRWDIPSHIESRLPGHRITTVCRRAKYLLIDTNAGGSLIIHLGMSGTLRLLAPETPLRPHDHVDIMLNNRRVLRFNDPRRFGCLLWQEDGQIHPLLQRLGCEPLSDSFNGDYLYQCSRARNVSVKTFLMDQRIVVGVGNIYAAESLFRAGISPLCEADKISLQRYRRLAEVVKDILLYAINRGGTTLRDFLSPDGRPGYFKQELFVYGRQQQPCKQCGSLLRQTTIRQRTTVWCGHCQG</sequence>
<gene>
    <name type="primary">mutM1</name>
    <name type="synonym">fpg1</name>
    <name type="ordered locus">XF_0071</name>
</gene>
<gene>
    <name type="primary">mutM2</name>
    <name type="synonym">fpg2</name>
    <name type="ordered locus">XF_0170</name>
</gene>
<proteinExistence type="inferred from homology"/>
<name>FPG_XYLFA</name>
<dbReference type="EC" id="3.2.2.23"/>
<dbReference type="EC" id="4.2.99.18"/>
<dbReference type="EMBL" id="AE003849">
    <property type="protein sequence ID" value="AAF82983.1"/>
    <property type="molecule type" value="Genomic_DNA"/>
</dbReference>
<dbReference type="EMBL" id="AE003849">
    <property type="protein sequence ID" value="AAF82884.1"/>
    <property type="molecule type" value="Genomic_DNA"/>
</dbReference>
<dbReference type="PIR" id="G82838">
    <property type="entry name" value="G82838"/>
</dbReference>
<dbReference type="SMR" id="P64154"/>
<dbReference type="STRING" id="160492.XF_0071"/>
<dbReference type="KEGG" id="xfa:XF_0071"/>
<dbReference type="KEGG" id="xfa:XF_0170"/>
<dbReference type="eggNOG" id="COG0266">
    <property type="taxonomic scope" value="Bacteria"/>
</dbReference>
<dbReference type="HOGENOM" id="CLU_038423_1_1_6"/>
<dbReference type="Proteomes" id="UP000000812">
    <property type="component" value="Chromosome"/>
</dbReference>
<dbReference type="GO" id="GO:0034039">
    <property type="term" value="F:8-oxo-7,8-dihydroguanine DNA N-glycosylase activity"/>
    <property type="evidence" value="ECO:0007669"/>
    <property type="project" value="TreeGrafter"/>
</dbReference>
<dbReference type="GO" id="GO:0140078">
    <property type="term" value="F:class I DNA-(apurinic or apyrimidinic site) endonuclease activity"/>
    <property type="evidence" value="ECO:0007669"/>
    <property type="project" value="UniProtKB-EC"/>
</dbReference>
<dbReference type="GO" id="GO:0003684">
    <property type="term" value="F:damaged DNA binding"/>
    <property type="evidence" value="ECO:0007669"/>
    <property type="project" value="InterPro"/>
</dbReference>
<dbReference type="GO" id="GO:0008270">
    <property type="term" value="F:zinc ion binding"/>
    <property type="evidence" value="ECO:0007669"/>
    <property type="project" value="UniProtKB-UniRule"/>
</dbReference>
<dbReference type="GO" id="GO:0006284">
    <property type="term" value="P:base-excision repair"/>
    <property type="evidence" value="ECO:0007669"/>
    <property type="project" value="InterPro"/>
</dbReference>
<dbReference type="CDD" id="cd08966">
    <property type="entry name" value="EcFpg-like_N"/>
    <property type="match status" value="1"/>
</dbReference>
<dbReference type="FunFam" id="1.10.8.50:FF:000003">
    <property type="entry name" value="Formamidopyrimidine-DNA glycosylase"/>
    <property type="match status" value="1"/>
</dbReference>
<dbReference type="FunFam" id="3.20.190.10:FF:000001">
    <property type="entry name" value="Formamidopyrimidine-DNA glycosylase"/>
    <property type="match status" value="1"/>
</dbReference>
<dbReference type="Gene3D" id="1.10.8.50">
    <property type="match status" value="1"/>
</dbReference>
<dbReference type="Gene3D" id="3.20.190.10">
    <property type="entry name" value="MutM-like, N-terminal"/>
    <property type="match status" value="1"/>
</dbReference>
<dbReference type="HAMAP" id="MF_00103">
    <property type="entry name" value="Fapy_DNA_glycosyl"/>
    <property type="match status" value="1"/>
</dbReference>
<dbReference type="InterPro" id="IPR015886">
    <property type="entry name" value="DNA_glyclase/AP_lyase_DNA-bd"/>
</dbReference>
<dbReference type="InterPro" id="IPR015887">
    <property type="entry name" value="DNA_glyclase_Znf_dom_DNA_BS"/>
</dbReference>
<dbReference type="InterPro" id="IPR020629">
    <property type="entry name" value="Formamido-pyr_DNA_Glyclase"/>
</dbReference>
<dbReference type="InterPro" id="IPR012319">
    <property type="entry name" value="FPG_cat"/>
</dbReference>
<dbReference type="InterPro" id="IPR035937">
    <property type="entry name" value="MutM-like_N-ter"/>
</dbReference>
<dbReference type="InterPro" id="IPR010979">
    <property type="entry name" value="Ribosomal_uS13-like_H2TH"/>
</dbReference>
<dbReference type="InterPro" id="IPR000214">
    <property type="entry name" value="Znf_DNA_glyclase/AP_lyase"/>
</dbReference>
<dbReference type="NCBIfam" id="TIGR00577">
    <property type="entry name" value="fpg"/>
    <property type="match status" value="1"/>
</dbReference>
<dbReference type="NCBIfam" id="NF002211">
    <property type="entry name" value="PRK01103.1"/>
    <property type="match status" value="1"/>
</dbReference>
<dbReference type="PANTHER" id="PTHR22993">
    <property type="entry name" value="FORMAMIDOPYRIMIDINE-DNA GLYCOSYLASE"/>
    <property type="match status" value="1"/>
</dbReference>
<dbReference type="PANTHER" id="PTHR22993:SF9">
    <property type="entry name" value="FORMAMIDOPYRIMIDINE-DNA GLYCOSYLASE"/>
    <property type="match status" value="1"/>
</dbReference>
<dbReference type="Pfam" id="PF01149">
    <property type="entry name" value="Fapy_DNA_glyco"/>
    <property type="match status" value="1"/>
</dbReference>
<dbReference type="Pfam" id="PF06831">
    <property type="entry name" value="H2TH"/>
    <property type="match status" value="1"/>
</dbReference>
<dbReference type="SMART" id="SM00898">
    <property type="entry name" value="Fapy_DNA_glyco"/>
    <property type="match status" value="1"/>
</dbReference>
<dbReference type="SMART" id="SM01232">
    <property type="entry name" value="H2TH"/>
    <property type="match status" value="1"/>
</dbReference>
<dbReference type="SUPFAM" id="SSF57716">
    <property type="entry name" value="Glucocorticoid receptor-like (DNA-binding domain)"/>
    <property type="match status" value="1"/>
</dbReference>
<dbReference type="SUPFAM" id="SSF81624">
    <property type="entry name" value="N-terminal domain of MutM-like DNA repair proteins"/>
    <property type="match status" value="1"/>
</dbReference>
<dbReference type="SUPFAM" id="SSF46946">
    <property type="entry name" value="S13-like H2TH domain"/>
    <property type="match status" value="1"/>
</dbReference>
<dbReference type="PROSITE" id="PS51068">
    <property type="entry name" value="FPG_CAT"/>
    <property type="match status" value="1"/>
</dbReference>
<dbReference type="PROSITE" id="PS01242">
    <property type="entry name" value="ZF_FPG_1"/>
    <property type="match status" value="1"/>
</dbReference>
<dbReference type="PROSITE" id="PS51066">
    <property type="entry name" value="ZF_FPG_2"/>
    <property type="match status" value="1"/>
</dbReference>
<accession>P64154</accession>
<accession>Q9P9S8</accession>
<keyword id="KW-0227">DNA damage</keyword>
<keyword id="KW-0234">DNA repair</keyword>
<keyword id="KW-0238">DNA-binding</keyword>
<keyword id="KW-0326">Glycosidase</keyword>
<keyword id="KW-0378">Hydrolase</keyword>
<keyword id="KW-0456">Lyase</keyword>
<keyword id="KW-0479">Metal-binding</keyword>
<keyword id="KW-0511">Multifunctional enzyme</keyword>
<keyword id="KW-0862">Zinc</keyword>
<keyword id="KW-0863">Zinc-finger</keyword>
<reference key="1">
    <citation type="journal article" date="2000" name="Nature">
        <title>The genome sequence of the plant pathogen Xylella fastidiosa.</title>
        <authorList>
            <person name="Simpson A.J.G."/>
            <person name="Reinach F.C."/>
            <person name="Arruda P."/>
            <person name="Abreu F.A."/>
            <person name="Acencio M."/>
            <person name="Alvarenga R."/>
            <person name="Alves L.M.C."/>
            <person name="Araya J.E."/>
            <person name="Baia G.S."/>
            <person name="Baptista C.S."/>
            <person name="Barros M.H."/>
            <person name="Bonaccorsi E.D."/>
            <person name="Bordin S."/>
            <person name="Bove J.M."/>
            <person name="Briones M.R.S."/>
            <person name="Bueno M.R.P."/>
            <person name="Camargo A.A."/>
            <person name="Camargo L.E.A."/>
            <person name="Carraro D.M."/>
            <person name="Carrer H."/>
            <person name="Colauto N.B."/>
            <person name="Colombo C."/>
            <person name="Costa F.F."/>
            <person name="Costa M.C.R."/>
            <person name="Costa-Neto C.M."/>
            <person name="Coutinho L.L."/>
            <person name="Cristofani M."/>
            <person name="Dias-Neto E."/>
            <person name="Docena C."/>
            <person name="El-Dorry H."/>
            <person name="Facincani A.P."/>
            <person name="Ferreira A.J.S."/>
            <person name="Ferreira V.C.A."/>
            <person name="Ferro J.A."/>
            <person name="Fraga J.S."/>
            <person name="Franca S.C."/>
            <person name="Franco M.C."/>
            <person name="Frohme M."/>
            <person name="Furlan L.R."/>
            <person name="Garnier M."/>
            <person name="Goldman G.H."/>
            <person name="Goldman M.H.S."/>
            <person name="Gomes S.L."/>
            <person name="Gruber A."/>
            <person name="Ho P.L."/>
            <person name="Hoheisel J.D."/>
            <person name="Junqueira M.L."/>
            <person name="Kemper E.L."/>
            <person name="Kitajima J.P."/>
            <person name="Krieger J.E."/>
            <person name="Kuramae E.E."/>
            <person name="Laigret F."/>
            <person name="Lambais M.R."/>
            <person name="Leite L.C.C."/>
            <person name="Lemos E.G.M."/>
            <person name="Lemos M.V.F."/>
            <person name="Lopes S.A."/>
            <person name="Lopes C.R."/>
            <person name="Machado J.A."/>
            <person name="Machado M.A."/>
            <person name="Madeira A.M.B.N."/>
            <person name="Madeira H.M.F."/>
            <person name="Marino C.L."/>
            <person name="Marques M.V."/>
            <person name="Martins E.A.L."/>
            <person name="Martins E.M.F."/>
            <person name="Matsukuma A.Y."/>
            <person name="Menck C.F.M."/>
            <person name="Miracca E.C."/>
            <person name="Miyaki C.Y."/>
            <person name="Monteiro-Vitorello C.B."/>
            <person name="Moon D.H."/>
            <person name="Nagai M.A."/>
            <person name="Nascimento A.L.T.O."/>
            <person name="Netto L.E.S."/>
            <person name="Nhani A. Jr."/>
            <person name="Nobrega F.G."/>
            <person name="Nunes L.R."/>
            <person name="Oliveira M.A."/>
            <person name="de Oliveira M.C."/>
            <person name="de Oliveira R.C."/>
            <person name="Palmieri D.A."/>
            <person name="Paris A."/>
            <person name="Peixoto B.R."/>
            <person name="Pereira G.A.G."/>
            <person name="Pereira H.A. Jr."/>
            <person name="Pesquero J.B."/>
            <person name="Quaggio R.B."/>
            <person name="Roberto P.G."/>
            <person name="Rodrigues V."/>
            <person name="de Rosa A.J.M."/>
            <person name="de Rosa V.E. Jr."/>
            <person name="de Sa R.G."/>
            <person name="Santelli R.V."/>
            <person name="Sawasaki H.E."/>
            <person name="da Silva A.C.R."/>
            <person name="da Silva A.M."/>
            <person name="da Silva F.R."/>
            <person name="Silva W.A. Jr."/>
            <person name="da Silveira J.F."/>
            <person name="Silvestri M.L.Z."/>
            <person name="Siqueira W.J."/>
            <person name="de Souza A.A."/>
            <person name="de Souza A.P."/>
            <person name="Terenzi M.F."/>
            <person name="Truffi D."/>
            <person name="Tsai S.M."/>
            <person name="Tsuhako M.H."/>
            <person name="Vallada H."/>
            <person name="Van Sluys M.A."/>
            <person name="Verjovski-Almeida S."/>
            <person name="Vettore A.L."/>
            <person name="Zago M.A."/>
            <person name="Zatz M."/>
            <person name="Meidanis J."/>
            <person name="Setubal J.C."/>
        </authorList>
    </citation>
    <scope>NUCLEOTIDE SEQUENCE [LARGE SCALE GENOMIC DNA]</scope>
    <source>
        <strain>9a5c</strain>
    </source>
</reference>
<evidence type="ECO:0000250" key="1"/>
<evidence type="ECO:0000305" key="2"/>
<comment type="function">
    <text evidence="1">Involved in base excision repair of DNA damaged by oxidation or by mutagenic agents. Acts as a DNA glycosylase that recognizes and removes damaged bases. Has a preference for oxidized purines, such as 7,8-dihydro-8-oxoguanine (8-oxoG). Has AP (apurinic/apyrimidinic) lyase activity and introduces nicks in the DNA strand. Cleaves the DNA backbone by beta-delta elimination to generate a single-strand break at the site of the removed base with both 3'- and 5'-phosphates (By similarity).</text>
</comment>
<comment type="catalytic activity">
    <reaction>
        <text>Hydrolysis of DNA containing ring-opened 7-methylguanine residues, releasing 2,6-diamino-4-hydroxy-5-(N-methyl)formamidopyrimidine.</text>
        <dbReference type="EC" id="3.2.2.23"/>
    </reaction>
</comment>
<comment type="catalytic activity">
    <reaction>
        <text>2'-deoxyribonucleotide-(2'-deoxyribose 5'-phosphate)-2'-deoxyribonucleotide-DNA = a 3'-end 2'-deoxyribonucleotide-(2,3-dehydro-2,3-deoxyribose 5'-phosphate)-DNA + a 5'-end 5'-phospho-2'-deoxyribonucleoside-DNA + H(+)</text>
        <dbReference type="Rhea" id="RHEA:66592"/>
        <dbReference type="Rhea" id="RHEA-COMP:13180"/>
        <dbReference type="Rhea" id="RHEA-COMP:16897"/>
        <dbReference type="Rhea" id="RHEA-COMP:17067"/>
        <dbReference type="ChEBI" id="CHEBI:15378"/>
        <dbReference type="ChEBI" id="CHEBI:136412"/>
        <dbReference type="ChEBI" id="CHEBI:157695"/>
        <dbReference type="ChEBI" id="CHEBI:167181"/>
        <dbReference type="EC" id="4.2.99.18"/>
    </reaction>
</comment>
<comment type="cofactor">
    <cofactor evidence="1">
        <name>Zn(2+)</name>
        <dbReference type="ChEBI" id="CHEBI:29105"/>
    </cofactor>
    <text evidence="1">Binds 1 zinc ion per subunit.</text>
</comment>
<comment type="subunit">
    <text evidence="1">Monomer.</text>
</comment>
<comment type="similarity">
    <text evidence="2">Belongs to the FPG family.</text>
</comment>
<protein>
    <recommendedName>
        <fullName>Formamidopyrimidine-DNA glycosylase</fullName>
        <shortName>Fapy-DNA glycosylase</shortName>
        <ecNumber>3.2.2.23</ecNumber>
    </recommendedName>
    <alternativeName>
        <fullName>DNA-(apurinic or apyrimidinic site) lyase MutM</fullName>
        <shortName>AP lyase MutM</shortName>
        <ecNumber>4.2.99.18</ecNumber>
    </alternativeName>
</protein>